<accession>A0MP03</accession>
<accession>Q6PA28</accession>
<sequence>MENALTARDRVGVQDFVLLENYTSEAAFIENLRKRFKENLIYTYIGSVLVSVNPYKDLEIYSKQHMERYRGVSFYEVSPHIYAIADNSYRSLRTERKDQCILISGESGSGKTEASKKILQYYAVTCPASDQVETVKDRLLQSNPVLEAFGNAKTLRNDNSSRFGKYMDVQFDYKGAPVGGHILNYLLEKSRVVHQNHGERNFHIFYQLLEGGEEELLRRLGLDKNAQNYQYLVKGQCARVSSINDKSDWKTVRRALSIINFNEEDIEELLSIVASVLHLGNVQFASDDHSHAQVTTENQIKYIARLLAVDATAFRESLIHKKIIAKGEELNSPLNLEQAAYARDAFAKAIYGRTFSWLVRNINKSLAYKGSDIQSIGNASVIGLLDIYGFEVFQHNSFEQFCINYCNEKLQQLFIELTLKSEQEEYESEGIAWEPVQYFNNKIICDLVEEKYKGIISILDEECLRPGEATDMTFLEKLEDTVKNHPHFVTHKFGDQKLRKSLGRDEFRPLHYAGEVNYSVVGFLDKNNDLLFRNLKEVMCDSGNPIVHQCFDRTELTDKKRPETVATQFKNSLSKLMEILMSKEPSYVRCIKPNDAKQAARFDEVLIRHQVKYLGLIENVRVRRAGFAYRRKYEIFLHRYKSLCPETWPNWDGRAQDGVAVLVKSLGYKPEEYKMGRTKIFIRFPKTLFATEDALEERKQGIATFLQARWKGYVQRRNFLHMKHSAINIQSWWRGNIGRKKAAKKRWAVDVVRRFVKGFIYRNNPRCPENEYFLDYIRYSFLMNLRRNMPKSVLDKSWPVPPPSLQEASELLREMCMNNMVWAYCKRISPEMKQQLEQKVVASEIFKDKKDNYPQSVPRLFINTRLGNEEINTKILQNMENQALTYAVPVVKYDRKGYKPRRRQLLLTHNTAYIVEEAKLKQRIDYANLTGISVSSLSDNLFVLHVKCEDNKQKGDVVLQSDHVIETLTKIAITAEKIHNINIIQGSIKFIVGNGKEGIIDFTPGSELLVAKAKNGHLSVVAPRLNSR</sequence>
<protein>
    <recommendedName>
        <fullName>Unconventional myosin-Ic-A</fullName>
    </recommendedName>
    <alternativeName>
        <fullName>Myosin I beta-A</fullName>
        <shortName>MMI-beta-A</shortName>
        <shortName>MMIb-A</shortName>
    </alternativeName>
</protein>
<keyword id="KW-0007">Acetylation</keyword>
<keyword id="KW-0009">Actin-binding</keyword>
<keyword id="KW-0067">ATP-binding</keyword>
<keyword id="KW-1003">Cell membrane</keyword>
<keyword id="KW-0966">Cell projection</keyword>
<keyword id="KW-0963">Cytoplasm</keyword>
<keyword id="KW-0472">Membrane</keyword>
<keyword id="KW-0488">Methylation</keyword>
<keyword id="KW-0505">Motor protein</keyword>
<keyword id="KW-0518">Myosin</keyword>
<keyword id="KW-0547">Nucleotide-binding</keyword>
<keyword id="KW-1185">Reference proteome</keyword>
<keyword id="KW-0677">Repeat</keyword>
<gene>
    <name type="primary">myo1c-a</name>
</gene>
<dbReference type="EMBL" id="EF026164">
    <property type="protein sequence ID" value="ABK55765.1"/>
    <property type="molecule type" value="mRNA"/>
</dbReference>
<dbReference type="EMBL" id="BC060477">
    <property type="protein sequence ID" value="AAH60477.1"/>
    <property type="molecule type" value="mRNA"/>
</dbReference>
<dbReference type="SMR" id="A0MP03"/>
<dbReference type="GeneID" id="398934"/>
<dbReference type="KEGG" id="xla:398934"/>
<dbReference type="AGR" id="Xenbase:XB-GENE-6254925"/>
<dbReference type="CTD" id="398934"/>
<dbReference type="Xenbase" id="XB-GENE-6254925">
    <property type="gene designation" value="myo1c.S"/>
</dbReference>
<dbReference type="OrthoDB" id="6108017at2759"/>
<dbReference type="Proteomes" id="UP000186698">
    <property type="component" value="Chromosome 2S"/>
</dbReference>
<dbReference type="Bgee" id="398934">
    <property type="expression patterns" value="Expressed in egg cell and 19 other cell types or tissues"/>
</dbReference>
<dbReference type="GO" id="GO:0015629">
    <property type="term" value="C:actin cytoskeleton"/>
    <property type="evidence" value="ECO:0000318"/>
    <property type="project" value="GO_Central"/>
</dbReference>
<dbReference type="GO" id="GO:0005737">
    <property type="term" value="C:cytoplasm"/>
    <property type="evidence" value="ECO:0000318"/>
    <property type="project" value="GO_Central"/>
</dbReference>
<dbReference type="GO" id="GO:0005902">
    <property type="term" value="C:microvillus"/>
    <property type="evidence" value="ECO:0000318"/>
    <property type="project" value="GO_Central"/>
</dbReference>
<dbReference type="GO" id="GO:0016459">
    <property type="term" value="C:myosin complex"/>
    <property type="evidence" value="ECO:0007669"/>
    <property type="project" value="UniProtKB-KW"/>
</dbReference>
<dbReference type="GO" id="GO:0005886">
    <property type="term" value="C:plasma membrane"/>
    <property type="evidence" value="ECO:0000318"/>
    <property type="project" value="GO_Central"/>
</dbReference>
<dbReference type="GO" id="GO:0060171">
    <property type="term" value="C:stereocilium membrane"/>
    <property type="evidence" value="ECO:0007669"/>
    <property type="project" value="UniProtKB-SubCell"/>
</dbReference>
<dbReference type="GO" id="GO:0051015">
    <property type="term" value="F:actin filament binding"/>
    <property type="evidence" value="ECO:0000318"/>
    <property type="project" value="GO_Central"/>
</dbReference>
<dbReference type="GO" id="GO:0005524">
    <property type="term" value="F:ATP binding"/>
    <property type="evidence" value="ECO:0007669"/>
    <property type="project" value="UniProtKB-KW"/>
</dbReference>
<dbReference type="GO" id="GO:0000146">
    <property type="term" value="F:microfilament motor activity"/>
    <property type="evidence" value="ECO:0000318"/>
    <property type="project" value="GO_Central"/>
</dbReference>
<dbReference type="GO" id="GO:0007015">
    <property type="term" value="P:actin filament organization"/>
    <property type="evidence" value="ECO:0000318"/>
    <property type="project" value="GO_Central"/>
</dbReference>
<dbReference type="GO" id="GO:0030048">
    <property type="term" value="P:actin filament-based movement"/>
    <property type="evidence" value="ECO:0000318"/>
    <property type="project" value="GO_Central"/>
</dbReference>
<dbReference type="GO" id="GO:0006897">
    <property type="term" value="P:endocytosis"/>
    <property type="evidence" value="ECO:0000318"/>
    <property type="project" value="GO_Central"/>
</dbReference>
<dbReference type="CDD" id="cd01378">
    <property type="entry name" value="MYSc_Myo1"/>
    <property type="match status" value="1"/>
</dbReference>
<dbReference type="FunFam" id="1.10.10.820:FF:000001">
    <property type="entry name" value="Myosin heavy chain"/>
    <property type="match status" value="1"/>
</dbReference>
<dbReference type="FunFam" id="3.40.850.10:FF:000101">
    <property type="entry name" value="Slow myosin heavy chain 2"/>
    <property type="match status" value="1"/>
</dbReference>
<dbReference type="FunFam" id="1.20.58.530:FF:000004">
    <property type="entry name" value="Unconventional myosin ID"/>
    <property type="match status" value="1"/>
</dbReference>
<dbReference type="Gene3D" id="1.10.10.820">
    <property type="match status" value="1"/>
</dbReference>
<dbReference type="Gene3D" id="1.20.5.190">
    <property type="match status" value="1"/>
</dbReference>
<dbReference type="Gene3D" id="1.20.58.530">
    <property type="match status" value="1"/>
</dbReference>
<dbReference type="Gene3D" id="6.20.240.20">
    <property type="match status" value="1"/>
</dbReference>
<dbReference type="Gene3D" id="3.40.850.10">
    <property type="entry name" value="Kinesin motor domain"/>
    <property type="match status" value="1"/>
</dbReference>
<dbReference type="Gene3D" id="1.20.120.720">
    <property type="entry name" value="Myosin VI head, motor domain, U50 subdomain"/>
    <property type="match status" value="1"/>
</dbReference>
<dbReference type="InterPro" id="IPR000048">
    <property type="entry name" value="IQ_motif_EF-hand-BS"/>
</dbReference>
<dbReference type="InterPro" id="IPR036961">
    <property type="entry name" value="Kinesin_motor_dom_sf"/>
</dbReference>
<dbReference type="InterPro" id="IPR001609">
    <property type="entry name" value="Myosin_head_motor_dom-like"/>
</dbReference>
<dbReference type="InterPro" id="IPR010926">
    <property type="entry name" value="Myosin_TH1"/>
</dbReference>
<dbReference type="InterPro" id="IPR036072">
    <property type="entry name" value="MYSc_Myo1"/>
</dbReference>
<dbReference type="InterPro" id="IPR027417">
    <property type="entry name" value="P-loop_NTPase"/>
</dbReference>
<dbReference type="PANTHER" id="PTHR13140">
    <property type="entry name" value="MYOSIN"/>
    <property type="match status" value="1"/>
</dbReference>
<dbReference type="PANTHER" id="PTHR13140:SF255">
    <property type="entry name" value="UNCONVENTIONAL MYOSIN-IC"/>
    <property type="match status" value="1"/>
</dbReference>
<dbReference type="Pfam" id="PF00612">
    <property type="entry name" value="IQ"/>
    <property type="match status" value="2"/>
</dbReference>
<dbReference type="Pfam" id="PF00063">
    <property type="entry name" value="Myosin_head"/>
    <property type="match status" value="1"/>
</dbReference>
<dbReference type="Pfam" id="PF06017">
    <property type="entry name" value="Myosin_TH1"/>
    <property type="match status" value="1"/>
</dbReference>
<dbReference type="PRINTS" id="PR00193">
    <property type="entry name" value="MYOSINHEAVY"/>
</dbReference>
<dbReference type="SMART" id="SM00015">
    <property type="entry name" value="IQ"/>
    <property type="match status" value="2"/>
</dbReference>
<dbReference type="SMART" id="SM00242">
    <property type="entry name" value="MYSc"/>
    <property type="match status" value="1"/>
</dbReference>
<dbReference type="SUPFAM" id="SSF52540">
    <property type="entry name" value="P-loop containing nucleoside triphosphate hydrolases"/>
    <property type="match status" value="1"/>
</dbReference>
<dbReference type="PROSITE" id="PS50096">
    <property type="entry name" value="IQ"/>
    <property type="match status" value="2"/>
</dbReference>
<dbReference type="PROSITE" id="PS51456">
    <property type="entry name" value="MYOSIN_MOTOR"/>
    <property type="match status" value="1"/>
</dbReference>
<dbReference type="PROSITE" id="PS51757">
    <property type="entry name" value="TH1"/>
    <property type="match status" value="1"/>
</dbReference>
<feature type="chain" id="PRO_0000369413" description="Unconventional myosin-Ic-A">
    <location>
        <begin position="1"/>
        <end position="1028"/>
    </location>
</feature>
<feature type="domain" description="Myosin motor" evidence="4">
    <location>
        <begin position="12"/>
        <end position="696"/>
    </location>
</feature>
<feature type="domain" description="IQ 1" evidence="3">
    <location>
        <begin position="699"/>
        <end position="728"/>
    </location>
</feature>
<feature type="domain" description="IQ 2" evidence="3">
    <location>
        <begin position="722"/>
        <end position="751"/>
    </location>
</feature>
<feature type="domain" description="TH1" evidence="5">
    <location>
        <begin position="850"/>
        <end position="1024"/>
    </location>
</feature>
<feature type="region of interest" description="Actin-binding" evidence="4">
    <location>
        <begin position="573"/>
        <end position="595"/>
    </location>
</feature>
<feature type="binding site" evidence="2">
    <location>
        <begin position="105"/>
        <end position="112"/>
    </location>
    <ligand>
        <name>ATP</name>
        <dbReference type="ChEBI" id="CHEBI:30616"/>
    </ligand>
</feature>
<feature type="modified residue" description="N-acetylmethionine" evidence="1">
    <location>
        <position position="1"/>
    </location>
</feature>
<feature type="modified residue" description="N6-methyllysine" evidence="1">
    <location>
        <position position="348"/>
    </location>
</feature>
<organism>
    <name type="scientific">Xenopus laevis</name>
    <name type="common">African clawed frog</name>
    <dbReference type="NCBI Taxonomy" id="8355"/>
    <lineage>
        <taxon>Eukaryota</taxon>
        <taxon>Metazoa</taxon>
        <taxon>Chordata</taxon>
        <taxon>Craniata</taxon>
        <taxon>Vertebrata</taxon>
        <taxon>Euteleostomi</taxon>
        <taxon>Amphibia</taxon>
        <taxon>Batrachia</taxon>
        <taxon>Anura</taxon>
        <taxon>Pipoidea</taxon>
        <taxon>Pipidae</taxon>
        <taxon>Xenopodinae</taxon>
        <taxon>Xenopus</taxon>
        <taxon>Xenopus</taxon>
    </lineage>
</organism>
<comment type="function">
    <text evidence="1 6">Myosins are actin-based motor molecules with ATPase activity. Unconventional myosins serve in intracellular movements. Their highly divergent tails are presumed to bind to membranous compartments, which would be moved relative to actin filaments (By similarity). Involved in egg activation by coupling dynamic actin to membrane.</text>
</comment>
<comment type="subunit">
    <text evidence="1">Interacts (via its IQ motifs) with calmodulin.</text>
</comment>
<comment type="subcellular location">
    <subcellularLocation>
        <location evidence="1">Cytoplasm</location>
    </subcellularLocation>
    <subcellularLocation>
        <location>Cell membrane</location>
    </subcellularLocation>
    <subcellularLocation>
        <location evidence="1">Cell projection</location>
        <location evidence="1">Stereocilium membrane</location>
    </subcellularLocation>
    <text>Colocalizes with cortical F-actin to the plasma membrane. Colocalizes with exocytosing corticale granules upon egg activation.</text>
</comment>
<comment type="developmental stage">
    <text evidence="6">Expressed during oogenesis and eggs. Up-regulated by polyadenylation during meiotic maturation (at protein level).</text>
</comment>
<comment type="similarity">
    <text evidence="7">Belongs to the TRAFAC class myosin-kinesin ATPase superfamily. Myosin family.</text>
</comment>
<comment type="caution">
    <text evidence="7">Represents an unconventional myosin. This protein should not be confused with the conventional myosin-1 (MYH1).</text>
</comment>
<evidence type="ECO:0000250" key="1"/>
<evidence type="ECO:0000255" key="2"/>
<evidence type="ECO:0000255" key="3">
    <source>
        <dbReference type="PROSITE-ProRule" id="PRU00116"/>
    </source>
</evidence>
<evidence type="ECO:0000255" key="4">
    <source>
        <dbReference type="PROSITE-ProRule" id="PRU00782"/>
    </source>
</evidence>
<evidence type="ECO:0000255" key="5">
    <source>
        <dbReference type="PROSITE-ProRule" id="PRU01093"/>
    </source>
</evidence>
<evidence type="ECO:0000269" key="6">
    <source>
    </source>
</evidence>
<evidence type="ECO:0000305" key="7"/>
<reference key="1">
    <citation type="journal article" date="2006" name="Dev. Cell">
        <title>Myosin-1c couples assembling actin to membranes to drive compensatory endocytosis.</title>
        <authorList>
            <person name="Sokac A.M."/>
            <person name="Schietroma C."/>
            <person name="Gundersen C.B."/>
            <person name="Bement W.M."/>
        </authorList>
    </citation>
    <scope>NUCLEOTIDE SEQUENCE [MRNA]</scope>
    <scope>FUNCTION</scope>
    <scope>DEVELOPMENTAL STAGE</scope>
</reference>
<reference key="2">
    <citation type="submission" date="2003-10" db="EMBL/GenBank/DDBJ databases">
        <authorList>
            <consortium name="NIH - Xenopus Gene Collection (XGC) project"/>
        </authorList>
    </citation>
    <scope>NUCLEOTIDE SEQUENCE [LARGE SCALE MRNA]</scope>
    <source>
        <tissue>Kidney</tissue>
    </source>
</reference>
<name>MY1CA_XENLA</name>
<proteinExistence type="evidence at protein level"/>